<reference key="1">
    <citation type="submission" date="2006-12" db="EMBL/GenBank/DDBJ databases">
        <title>Complete sequence of Acidovorax avenae subsp. citrulli AAC00-1.</title>
        <authorList>
            <person name="Copeland A."/>
            <person name="Lucas S."/>
            <person name="Lapidus A."/>
            <person name="Barry K."/>
            <person name="Detter J.C."/>
            <person name="Glavina del Rio T."/>
            <person name="Dalin E."/>
            <person name="Tice H."/>
            <person name="Pitluck S."/>
            <person name="Kiss H."/>
            <person name="Brettin T."/>
            <person name="Bruce D."/>
            <person name="Han C."/>
            <person name="Tapia R."/>
            <person name="Gilna P."/>
            <person name="Schmutz J."/>
            <person name="Larimer F."/>
            <person name="Land M."/>
            <person name="Hauser L."/>
            <person name="Kyrpides N."/>
            <person name="Kim E."/>
            <person name="Stahl D."/>
            <person name="Richardson P."/>
        </authorList>
    </citation>
    <scope>NUCLEOTIDE SEQUENCE [LARGE SCALE GENOMIC DNA]</scope>
    <source>
        <strain>AAC00-1</strain>
    </source>
</reference>
<feature type="chain" id="PRO_1000046636" description="UPF0301 protein Aave_0907">
    <location>
        <begin position="1"/>
        <end position="213"/>
    </location>
</feature>
<feature type="region of interest" description="Disordered" evidence="2">
    <location>
        <begin position="93"/>
        <end position="120"/>
    </location>
</feature>
<sequence length="213" mass="22603">MPADSAPMNLTHHFLIAMPGLEDESFARSVVYLCEHSERGALGLIINKPSDLSLKGLFDKVDLSLRREDLSLEPVFRGGPVQTERGFVLHEAMGPSSGKQAAGEGGAQAEGEGAEESAYASTMSIPGGLEMTTSKDVLEALSTGAGPRRVLVTLGYSSWGEGQLESELAENSWLTVGADLSVIFDTPVGQRYDRALALLGLQSWMLSPEAGHA</sequence>
<evidence type="ECO:0000255" key="1">
    <source>
        <dbReference type="HAMAP-Rule" id="MF_00758"/>
    </source>
</evidence>
<evidence type="ECO:0000256" key="2">
    <source>
        <dbReference type="SAM" id="MobiDB-lite"/>
    </source>
</evidence>
<name>Y907_PARC0</name>
<accession>A1TKL7</accession>
<comment type="similarity">
    <text evidence="1">Belongs to the UPF0301 (AlgH) family.</text>
</comment>
<proteinExistence type="inferred from homology"/>
<dbReference type="EMBL" id="CP000512">
    <property type="protein sequence ID" value="ABM31505.1"/>
    <property type="molecule type" value="Genomic_DNA"/>
</dbReference>
<dbReference type="RefSeq" id="WP_011794063.1">
    <property type="nucleotide sequence ID" value="NC_008752.1"/>
</dbReference>
<dbReference type="SMR" id="A1TKL7"/>
<dbReference type="STRING" id="397945.Aave_0907"/>
<dbReference type="GeneID" id="79790560"/>
<dbReference type="KEGG" id="aav:Aave_0907"/>
<dbReference type="eggNOG" id="COG1678">
    <property type="taxonomic scope" value="Bacteria"/>
</dbReference>
<dbReference type="HOGENOM" id="CLU_057596_1_0_4"/>
<dbReference type="OrthoDB" id="9807486at2"/>
<dbReference type="Proteomes" id="UP000002596">
    <property type="component" value="Chromosome"/>
</dbReference>
<dbReference type="GO" id="GO:0005829">
    <property type="term" value="C:cytosol"/>
    <property type="evidence" value="ECO:0007669"/>
    <property type="project" value="TreeGrafter"/>
</dbReference>
<dbReference type="Gene3D" id="3.40.1740.10">
    <property type="entry name" value="VC0467-like"/>
    <property type="match status" value="1"/>
</dbReference>
<dbReference type="HAMAP" id="MF_00758">
    <property type="entry name" value="UPF0301"/>
    <property type="match status" value="1"/>
</dbReference>
<dbReference type="InterPro" id="IPR003774">
    <property type="entry name" value="AlgH-like"/>
</dbReference>
<dbReference type="PANTHER" id="PTHR30327">
    <property type="entry name" value="UNCHARACTERIZED PROTEIN YQGE"/>
    <property type="match status" value="1"/>
</dbReference>
<dbReference type="PANTHER" id="PTHR30327:SF1">
    <property type="entry name" value="UPF0301 PROTEIN YQGE"/>
    <property type="match status" value="1"/>
</dbReference>
<dbReference type="Pfam" id="PF02622">
    <property type="entry name" value="DUF179"/>
    <property type="match status" value="1"/>
</dbReference>
<dbReference type="SUPFAM" id="SSF143456">
    <property type="entry name" value="VC0467-like"/>
    <property type="match status" value="1"/>
</dbReference>
<gene>
    <name type="ordered locus">Aave_0907</name>
</gene>
<protein>
    <recommendedName>
        <fullName evidence="1">UPF0301 protein Aave_0907</fullName>
    </recommendedName>
</protein>
<organism>
    <name type="scientific">Paracidovorax citrulli (strain AAC00-1)</name>
    <name type="common">Acidovorax citrulli</name>
    <dbReference type="NCBI Taxonomy" id="397945"/>
    <lineage>
        <taxon>Bacteria</taxon>
        <taxon>Pseudomonadati</taxon>
        <taxon>Pseudomonadota</taxon>
        <taxon>Betaproteobacteria</taxon>
        <taxon>Burkholderiales</taxon>
        <taxon>Comamonadaceae</taxon>
        <taxon>Paracidovorax</taxon>
    </lineage>
</organism>